<feature type="chain" id="PRO_0000303824" description="Exodeoxyribonuclease 7 large subunit">
    <location>
        <begin position="1"/>
        <end position="446"/>
    </location>
</feature>
<reference key="1">
    <citation type="journal article" date="2004" name="Nat. Biotechnol.">
        <title>Complete sequence and comparative genome analysis of the dairy bacterium Streptococcus thermophilus.</title>
        <authorList>
            <person name="Bolotin A."/>
            <person name="Quinquis B."/>
            <person name="Renault P."/>
            <person name="Sorokin A."/>
            <person name="Ehrlich S.D."/>
            <person name="Kulakauskas S."/>
            <person name="Lapidus A."/>
            <person name="Goltsman E."/>
            <person name="Mazur M."/>
            <person name="Pusch G.D."/>
            <person name="Fonstein M."/>
            <person name="Overbeek R."/>
            <person name="Kyprides N."/>
            <person name="Purnelle B."/>
            <person name="Prozzi D."/>
            <person name="Ngui K."/>
            <person name="Masuy D."/>
            <person name="Hancy F."/>
            <person name="Burteau S."/>
            <person name="Boutry M."/>
            <person name="Delcour J."/>
            <person name="Goffeau A."/>
            <person name="Hols P."/>
        </authorList>
    </citation>
    <scope>NUCLEOTIDE SEQUENCE [LARGE SCALE GENOMIC DNA]</scope>
    <source>
        <strain>ATCC BAA-250 / LMG 18311</strain>
    </source>
</reference>
<accession>Q5M3Z1</accession>
<keyword id="KW-0963">Cytoplasm</keyword>
<keyword id="KW-0269">Exonuclease</keyword>
<keyword id="KW-0378">Hydrolase</keyword>
<keyword id="KW-0540">Nuclease</keyword>
<keyword id="KW-1185">Reference proteome</keyword>
<sequence length="446" mass="50821">MSDYLSVTSLTKYLKMKFDRDPYLERVYLTGQVSNYRRRPSHQYFSLKDEGAVIQATIWAGVFKKIGFDLEEGMKINVVGRVQIYEPSGSYSLIIEKAEPDGIGALALQFEQLRKKLTAEGYFDDRHKQPLPNFVKKIGVITSPSGAVIRDIITTVSRRFPGVEILLFPTKVQGDGAAQEIVENIQKANQREDLDLLIVGRGGGSIEDLWAFNEEIVVQSIFESRLPVISSVGHETDTTLADFVADRRAATPTAAAELATPISKADTLAWIRERQNRAYQACLRRIQYNQERLAKLSQSVVFRQPERLYDGYLQKLDRLTTRLETFMSQDFERKQKSAEFLRQRLHGLNLSTRVKNYQDRRESLQRLLVTTTKNTINGNRVRLEKAQDALLSLDTSRIVARGYAIVNKNDKPLTTIKDITEGEQLTIQMRDGQLEVEVKNVNEKNI</sequence>
<organism>
    <name type="scientific">Streptococcus thermophilus (strain ATCC BAA-250 / LMG 18311)</name>
    <dbReference type="NCBI Taxonomy" id="264199"/>
    <lineage>
        <taxon>Bacteria</taxon>
        <taxon>Bacillati</taxon>
        <taxon>Bacillota</taxon>
        <taxon>Bacilli</taxon>
        <taxon>Lactobacillales</taxon>
        <taxon>Streptococcaceae</taxon>
        <taxon>Streptococcus</taxon>
    </lineage>
</organism>
<proteinExistence type="inferred from homology"/>
<gene>
    <name evidence="1" type="primary">xseA</name>
    <name type="ordered locus">stu1218</name>
</gene>
<protein>
    <recommendedName>
        <fullName evidence="1">Exodeoxyribonuclease 7 large subunit</fullName>
        <ecNumber evidence="1">3.1.11.6</ecNumber>
    </recommendedName>
    <alternativeName>
        <fullName evidence="1">Exodeoxyribonuclease VII large subunit</fullName>
        <shortName evidence="1">Exonuclease VII large subunit</shortName>
    </alternativeName>
</protein>
<comment type="function">
    <text evidence="1">Bidirectionally degrades single-stranded DNA into large acid-insoluble oligonucleotides, which are then degraded further into small acid-soluble oligonucleotides.</text>
</comment>
<comment type="catalytic activity">
    <reaction evidence="1">
        <text>Exonucleolytic cleavage in either 5'- to 3'- or 3'- to 5'-direction to yield nucleoside 5'-phosphates.</text>
        <dbReference type="EC" id="3.1.11.6"/>
    </reaction>
</comment>
<comment type="subunit">
    <text evidence="1">Heterooligomer composed of large and small subunits.</text>
</comment>
<comment type="subcellular location">
    <subcellularLocation>
        <location evidence="1">Cytoplasm</location>
    </subcellularLocation>
</comment>
<comment type="similarity">
    <text evidence="1">Belongs to the XseA family.</text>
</comment>
<evidence type="ECO:0000255" key="1">
    <source>
        <dbReference type="HAMAP-Rule" id="MF_00378"/>
    </source>
</evidence>
<name>EX7L_STRT2</name>
<dbReference type="EC" id="3.1.11.6" evidence="1"/>
<dbReference type="EMBL" id="CP000023">
    <property type="protein sequence ID" value="AAV60852.1"/>
    <property type="molecule type" value="Genomic_DNA"/>
</dbReference>
<dbReference type="RefSeq" id="WP_011226129.1">
    <property type="nucleotide sequence ID" value="NC_006448.1"/>
</dbReference>
<dbReference type="SMR" id="Q5M3Z1"/>
<dbReference type="STRING" id="264199.stu1218"/>
<dbReference type="GeneID" id="66899010"/>
<dbReference type="KEGG" id="stl:stu1218"/>
<dbReference type="eggNOG" id="COG1570">
    <property type="taxonomic scope" value="Bacteria"/>
</dbReference>
<dbReference type="HOGENOM" id="CLU_023625_3_1_9"/>
<dbReference type="Proteomes" id="UP000001170">
    <property type="component" value="Chromosome"/>
</dbReference>
<dbReference type="GO" id="GO:0005737">
    <property type="term" value="C:cytoplasm"/>
    <property type="evidence" value="ECO:0007669"/>
    <property type="project" value="UniProtKB-SubCell"/>
</dbReference>
<dbReference type="GO" id="GO:0009318">
    <property type="term" value="C:exodeoxyribonuclease VII complex"/>
    <property type="evidence" value="ECO:0007669"/>
    <property type="project" value="InterPro"/>
</dbReference>
<dbReference type="GO" id="GO:0008855">
    <property type="term" value="F:exodeoxyribonuclease VII activity"/>
    <property type="evidence" value="ECO:0007669"/>
    <property type="project" value="UniProtKB-UniRule"/>
</dbReference>
<dbReference type="GO" id="GO:0003676">
    <property type="term" value="F:nucleic acid binding"/>
    <property type="evidence" value="ECO:0007669"/>
    <property type="project" value="InterPro"/>
</dbReference>
<dbReference type="GO" id="GO:0006308">
    <property type="term" value="P:DNA catabolic process"/>
    <property type="evidence" value="ECO:0007669"/>
    <property type="project" value="UniProtKB-UniRule"/>
</dbReference>
<dbReference type="CDD" id="cd04489">
    <property type="entry name" value="ExoVII_LU_OBF"/>
    <property type="match status" value="1"/>
</dbReference>
<dbReference type="HAMAP" id="MF_00378">
    <property type="entry name" value="Exonuc_7_L"/>
    <property type="match status" value="1"/>
</dbReference>
<dbReference type="InterPro" id="IPR003753">
    <property type="entry name" value="Exonuc_VII_L"/>
</dbReference>
<dbReference type="InterPro" id="IPR020579">
    <property type="entry name" value="Exonuc_VII_lsu_C"/>
</dbReference>
<dbReference type="InterPro" id="IPR025824">
    <property type="entry name" value="OB-fold_nuc-bd_dom"/>
</dbReference>
<dbReference type="NCBIfam" id="TIGR00237">
    <property type="entry name" value="xseA"/>
    <property type="match status" value="1"/>
</dbReference>
<dbReference type="PANTHER" id="PTHR30008">
    <property type="entry name" value="EXODEOXYRIBONUCLEASE 7 LARGE SUBUNIT"/>
    <property type="match status" value="1"/>
</dbReference>
<dbReference type="PANTHER" id="PTHR30008:SF0">
    <property type="entry name" value="EXODEOXYRIBONUCLEASE 7 LARGE SUBUNIT"/>
    <property type="match status" value="1"/>
</dbReference>
<dbReference type="Pfam" id="PF02601">
    <property type="entry name" value="Exonuc_VII_L"/>
    <property type="match status" value="1"/>
</dbReference>
<dbReference type="Pfam" id="PF13742">
    <property type="entry name" value="tRNA_anti_2"/>
    <property type="match status" value="1"/>
</dbReference>